<name>PP2BB_HUMAN</name>
<feature type="initiator methionine" description="Removed" evidence="18">
    <location>
        <position position="1"/>
    </location>
</feature>
<feature type="chain" id="PRO_0000058825" description="Serine/threonine-protein phosphatase 2B catalytic subunit beta isoform">
    <location>
        <begin position="2"/>
        <end position="524"/>
    </location>
</feature>
<feature type="region of interest" description="Disordered" evidence="4">
    <location>
        <begin position="1"/>
        <end position="25"/>
    </location>
</feature>
<feature type="region of interest" description="Catalytic" evidence="13">
    <location>
        <begin position="65"/>
        <end position="356"/>
    </location>
</feature>
<feature type="region of interest" description="Calcineurin B binding" evidence="7">
    <location>
        <begin position="357"/>
        <end position="379"/>
    </location>
</feature>
<feature type="region of interest" description="Calmodulin-binding" evidence="7">
    <location>
        <begin position="401"/>
        <end position="415"/>
    </location>
</feature>
<feature type="region of interest" description="Autoinhibitory segment" evidence="7">
    <location>
        <begin position="416"/>
        <end position="423"/>
    </location>
</feature>
<feature type="region of interest" description="Autoinhibitory domain" evidence="7">
    <location>
        <begin position="474"/>
        <end position="496"/>
    </location>
</feature>
<feature type="short sequence motif" description="SAPNY motif" evidence="3">
    <location>
        <begin position="316"/>
        <end position="320"/>
    </location>
</feature>
<feature type="compositionally biased region" description="Pro residues" evidence="4">
    <location>
        <begin position="9"/>
        <end position="22"/>
    </location>
</feature>
<feature type="active site" description="Proton donor" evidence="3">
    <location>
        <position position="160"/>
    </location>
</feature>
<feature type="binding site" evidence="7 15 16 17">
    <location>
        <position position="99"/>
    </location>
    <ligand>
        <name>Fe cation</name>
        <dbReference type="ChEBI" id="CHEBI:24875"/>
    </ligand>
</feature>
<feature type="binding site" evidence="7 15 16 17">
    <location>
        <position position="101"/>
    </location>
    <ligand>
        <name>Fe cation</name>
        <dbReference type="ChEBI" id="CHEBI:24875"/>
    </ligand>
</feature>
<feature type="binding site" evidence="7 15 17">
    <location>
        <position position="127"/>
    </location>
    <ligand>
        <name>Fe cation</name>
        <dbReference type="ChEBI" id="CHEBI:24875"/>
    </ligand>
</feature>
<feature type="binding site" evidence="7 15 16 17">
    <location>
        <position position="127"/>
    </location>
    <ligand>
        <name>Zn(2+)</name>
        <dbReference type="ChEBI" id="CHEBI:29105"/>
    </ligand>
</feature>
<feature type="binding site" evidence="7 15 16 17">
    <location>
        <position position="159"/>
    </location>
    <ligand>
        <name>Zn(2+)</name>
        <dbReference type="ChEBI" id="CHEBI:29105"/>
    </ligand>
</feature>
<feature type="binding site" evidence="7 15 17">
    <location>
        <position position="208"/>
    </location>
    <ligand>
        <name>Zn(2+)</name>
        <dbReference type="ChEBI" id="CHEBI:29105"/>
    </ligand>
</feature>
<feature type="binding site" evidence="7 15 16 17">
    <location>
        <position position="290"/>
    </location>
    <ligand>
        <name>Zn(2+)</name>
        <dbReference type="ChEBI" id="CHEBI:29105"/>
    </ligand>
</feature>
<feature type="modified residue" description="N-acetylalanine" evidence="18">
    <location>
        <position position="2"/>
    </location>
</feature>
<feature type="modified residue" description="Phosphoserine" evidence="2">
    <location>
        <position position="478"/>
    </location>
</feature>
<feature type="splice variant" id="VSP_005096" description="In isoform 2." evidence="12">
    <original>E</original>
    <variation>EHVLGTEDISINPHNNINE</variation>
    <location>
        <position position="137"/>
    </location>
</feature>
<feature type="splice variant" id="VSP_043803" description="In isoform 3 and isoform 4." evidence="10 11">
    <original>D</original>
    <variation>DV</variation>
    <location>
        <position position="395"/>
    </location>
</feature>
<feature type="splice variant" id="VSP_005097" description="In isoform 2." evidence="12">
    <original>ATVEAIEAEKAIRGFSPPHRICSFEEAKGLDRINERMPPRKDAVQQDGFNSLNTAHATENHGTGNHTAQ</original>
    <variation>GNDVMQLAVPQMDWGTPHSFANNSHNACREFLLFFSSCLSS</variation>
    <location>
        <begin position="456"/>
        <end position="524"/>
    </location>
</feature>
<feature type="splice variant" id="VSP_012617" description="In isoform 3." evidence="11">
    <location>
        <begin position="456"/>
        <end position="465"/>
    </location>
</feature>
<feature type="mutagenesis site" description="Increases catalytic efficiency towards NFATC1 and DARPP32 but not towards a peptide substrate. Does not affect cytoplasmic localization and activation by calmodulin." evidence="5">
    <location>
        <begin position="2"/>
        <end position="21"/>
    </location>
</feature>
<feature type="mutagenesis site" description="Severe loss of calmodulin-mediated activation. Probably prevents recognition of substrates." evidence="7">
    <original>L</original>
    <variation>A</variation>
    <location>
        <position position="352"/>
    </location>
</feature>
<feature type="mutagenesis site" description="Reduction of basal catalytic activity in absence of calmodulin." evidence="7">
    <original>P</original>
    <variation>A</variation>
    <location>
        <position position="353"/>
    </location>
</feature>
<feature type="mutagenesis site" description="Modest increase in catalytic activity in absence of calmodulin." evidence="7">
    <original>M</original>
    <variation>A</variation>
    <location>
        <position position="356"/>
    </location>
</feature>
<feature type="mutagenesis site" description="Loss of catalytic activity. Loss of interaction with PPP3R1/calreticulin B and calmodulin." evidence="7">
    <location>
        <begin position="357"/>
        <end position="524"/>
    </location>
</feature>
<feature type="mutagenesis site" description="Severe reduction of basal catalytic activity in absence of calmodulin. Severe loss of calmodulin-mediated activation. Probably prevents recognition of substrates." evidence="7">
    <original>W</original>
    <variation>A</variation>
    <location>
        <position position="361"/>
    </location>
</feature>
<feature type="mutagenesis site" description="Moderate loss of calmodulin-mediated activation. Probably prevents recognition of substrates." evidence="7">
    <original>F</original>
    <variation>A</variation>
    <location>
        <position position="365"/>
    </location>
</feature>
<feature type="mutagenesis site" description="Increases catalytic activity independently of calmodulin. Loss of interaction with calmodulin. Does not affect interaction with PPP3R1/calreticulin B." evidence="7">
    <location>
        <begin position="398"/>
        <end position="524"/>
    </location>
</feature>
<feature type="mutagenesis site" description="Increases catalytic activity independently of calmodulin. Does not affect interaction with PPP3R1/calreticulin B and calmodulin." evidence="7">
    <location>
        <begin position="415"/>
        <end position="524"/>
    </location>
</feature>
<feature type="mutagenesis site" description="Modest increase in catalytic activity in absence of calmodulin. Does not affect interaction with calmodulin." evidence="7">
    <original>R</original>
    <variation>A</variation>
    <location>
        <position position="417"/>
    </location>
</feature>
<feature type="mutagenesis site" description="Does not affect catalytic activity in absence of calmodulin. Does not affect interaction with calmodulin." evidence="7">
    <original>V</original>
    <variation>A</variation>
    <location>
        <position position="418"/>
    </location>
</feature>
<feature type="mutagenesis site" description="Modest increase in catalytic activity in absence of calmodulin. Does not affect interaction with calmodulin." evidence="7">
    <original>F</original>
    <variation>A</variation>
    <location>
        <position position="419"/>
    </location>
</feature>
<feature type="mutagenesis site" description="Does not affect catalytic activity in absence of calmodulin. Does not affect interaction with calmodulin." evidence="7">
    <original>S</original>
    <variation>A</variation>
    <location>
        <position position="420"/>
    </location>
</feature>
<feature type="mutagenesis site" description="Modest increase in catalytic activity in absence of calmodulin. Does not affect interaction with calmodulin." evidence="7">
    <original>V</original>
    <variation>A</variation>
    <location>
        <position position="421"/>
    </location>
</feature>
<feature type="mutagenesis site" description="Modest increase in catalytic activity in absence of calmodulin. Does not affect interaction with calmodulin." evidence="7">
    <original>L</original>
    <variation>A</variation>
    <location>
        <position position="422"/>
    </location>
</feature>
<feature type="mutagenesis site" description="Modest increase in catalytic activity in absence of calmodulin. Does not affect interaction with calmodulin." evidence="7">
    <original>R</original>
    <variation>A</variation>
    <location>
        <position position="423"/>
    </location>
</feature>
<feature type="mutagenesis site" description="Increases basal catalytic activity. Does not affect interaction with PPP3R1/calreticulin B and calmodulin." evidence="7">
    <location>
        <begin position="451"/>
        <end position="524"/>
    </location>
</feature>
<feature type="helix" evidence="20">
    <location>
        <begin position="21"/>
        <end position="23"/>
    </location>
</feature>
<feature type="helix" evidence="19">
    <location>
        <begin position="40"/>
        <end position="43"/>
    </location>
</feature>
<feature type="helix" evidence="19">
    <location>
        <begin position="52"/>
        <end position="60"/>
    </location>
</feature>
<feature type="helix" evidence="19">
    <location>
        <begin position="67"/>
        <end position="82"/>
    </location>
</feature>
<feature type="strand" evidence="19">
    <location>
        <begin position="86"/>
        <end position="90"/>
    </location>
</feature>
<feature type="strand" evidence="19">
    <location>
        <begin position="92"/>
        <end position="97"/>
    </location>
</feature>
<feature type="helix" evidence="19">
    <location>
        <begin position="104"/>
        <end position="114"/>
    </location>
</feature>
<feature type="turn" evidence="19">
    <location>
        <begin position="117"/>
        <end position="119"/>
    </location>
</feature>
<feature type="strand" evidence="19">
    <location>
        <begin position="122"/>
        <end position="124"/>
    </location>
</feature>
<feature type="strand" evidence="19">
    <location>
        <begin position="129"/>
        <end position="132"/>
    </location>
</feature>
<feature type="helix" evidence="19">
    <location>
        <begin position="135"/>
        <end position="148"/>
    </location>
</feature>
<feature type="turn" evidence="19">
    <location>
        <begin position="150"/>
        <end position="152"/>
    </location>
</feature>
<feature type="strand" evidence="19">
    <location>
        <begin position="153"/>
        <end position="155"/>
    </location>
</feature>
<feature type="helix" evidence="19">
    <location>
        <begin position="163"/>
        <end position="168"/>
    </location>
</feature>
<feature type="helix" evidence="19">
    <location>
        <begin position="171"/>
        <end position="178"/>
    </location>
</feature>
<feature type="helix" evidence="19">
    <location>
        <begin position="181"/>
        <end position="192"/>
    </location>
</feature>
<feature type="strand" evidence="19">
    <location>
        <begin position="196"/>
        <end position="200"/>
    </location>
</feature>
<feature type="turn" evidence="19">
    <location>
        <begin position="201"/>
        <end position="203"/>
    </location>
</feature>
<feature type="strand" evidence="19">
    <location>
        <begin position="204"/>
        <end position="209"/>
    </location>
</feature>
<feature type="helix" evidence="19">
    <location>
        <begin position="218"/>
        <end position="222"/>
    </location>
</feature>
<feature type="strand" evidence="19">
    <location>
        <begin position="232"/>
        <end position="234"/>
    </location>
</feature>
<feature type="helix" evidence="19">
    <location>
        <begin position="235"/>
        <end position="241"/>
    </location>
</feature>
<feature type="turn" evidence="19">
    <location>
        <begin position="246"/>
        <end position="249"/>
    </location>
</feature>
<feature type="strand" evidence="19">
    <location>
        <begin position="256"/>
        <end position="259"/>
    </location>
</feature>
<feature type="turn" evidence="19">
    <location>
        <begin position="261"/>
        <end position="263"/>
    </location>
</feature>
<feature type="strand" evidence="19">
    <location>
        <begin position="264"/>
        <end position="269"/>
    </location>
</feature>
<feature type="helix" evidence="19">
    <location>
        <begin position="271"/>
        <end position="281"/>
    </location>
</feature>
<feature type="strand" evidence="19">
    <location>
        <begin position="284"/>
        <end position="288"/>
    </location>
</feature>
<feature type="strand" evidence="19">
    <location>
        <begin position="296"/>
        <end position="299"/>
    </location>
</feature>
<feature type="turn" evidence="19">
    <location>
        <begin position="304"/>
        <end position="306"/>
    </location>
</feature>
<feature type="strand" evidence="19">
    <location>
        <begin position="308"/>
        <end position="315"/>
    </location>
</feature>
<feature type="helix" evidence="19">
    <location>
        <begin position="320"/>
        <end position="322"/>
    </location>
</feature>
<feature type="strand" evidence="19">
    <location>
        <begin position="328"/>
        <end position="334"/>
    </location>
</feature>
<feature type="strand" evidence="19">
    <location>
        <begin position="337"/>
        <end position="343"/>
    </location>
</feature>
<feature type="helix" evidence="19">
    <location>
        <begin position="353"/>
        <end position="355"/>
    </location>
</feature>
<feature type="helix" evidence="19">
    <location>
        <begin position="358"/>
        <end position="378"/>
    </location>
</feature>
<feature type="strand" evidence="20">
    <location>
        <begin position="381"/>
        <end position="383"/>
    </location>
</feature>
<feature type="turn" evidence="19">
    <location>
        <begin position="384"/>
        <end position="386"/>
    </location>
</feature>
<feature type="helix" evidence="19">
    <location>
        <begin position="479"/>
        <end position="485"/>
    </location>
</feature>
<feature type="helix" evidence="19">
    <location>
        <begin position="488"/>
        <end position="490"/>
    </location>
</feature>
<accession>P16298</accession>
<accession>P16299</accession>
<accession>Q5F2F9</accession>
<accession>Q8N1F0</accession>
<accession>Q8N3W4</accession>
<comment type="function">
    <text evidence="2 5 6 7 8">Calcium-dependent, calmodulin-stimulated protein phosphatase which plays an essential role in the transduction of intracellular Ca(2+)-mediated signals (PubMed:19154138, PubMed:25720963, PubMed:26794871, PubMed:32753672). Dephosphorylates TFEB in response to lysosomal Ca(2+) release, resulting in TFEB nuclear translocation and stimulation of lysosomal biogenesis (PubMed:25720963, PubMed:32753672). Dephosphorylates and activates transcription factor NFATC1 (PubMed:19154138). Dephosphorylates and inactivates transcription factor ELK1 (PubMed:19154138). Dephosphorylates DARPP32 (PubMed:19154138). Negatively regulates MAP3K14/NIK signaling via inhibition of nuclear translocation of the transcription factors RELA and RELB (By similarity). May play a role in skeletal muscle fiber type specification (By similarity).</text>
</comment>
<comment type="catalytic activity">
    <reaction evidence="5 6 7 8">
        <text>O-phospho-L-seryl-[protein] + H2O = L-seryl-[protein] + phosphate</text>
        <dbReference type="Rhea" id="RHEA:20629"/>
        <dbReference type="Rhea" id="RHEA-COMP:9863"/>
        <dbReference type="Rhea" id="RHEA-COMP:11604"/>
        <dbReference type="ChEBI" id="CHEBI:15377"/>
        <dbReference type="ChEBI" id="CHEBI:29999"/>
        <dbReference type="ChEBI" id="CHEBI:43474"/>
        <dbReference type="ChEBI" id="CHEBI:83421"/>
        <dbReference type="EC" id="3.1.3.16"/>
    </reaction>
</comment>
<comment type="catalytic activity">
    <reaction evidence="5 7">
        <text>O-phospho-L-threonyl-[protein] + H2O = L-threonyl-[protein] + phosphate</text>
        <dbReference type="Rhea" id="RHEA:47004"/>
        <dbReference type="Rhea" id="RHEA-COMP:11060"/>
        <dbReference type="Rhea" id="RHEA-COMP:11605"/>
        <dbReference type="ChEBI" id="CHEBI:15377"/>
        <dbReference type="ChEBI" id="CHEBI:30013"/>
        <dbReference type="ChEBI" id="CHEBI:43474"/>
        <dbReference type="ChEBI" id="CHEBI:61977"/>
        <dbReference type="EC" id="3.1.3.16"/>
    </reaction>
</comment>
<comment type="cofactor">
    <cofactor evidence="7">
        <name>Fe(3+)</name>
        <dbReference type="ChEBI" id="CHEBI:29034"/>
    </cofactor>
    <text evidence="7">Binds 1 Fe(3+) ion per subunit.</text>
</comment>
<comment type="cofactor">
    <cofactor evidence="7">
        <name>Zn(2+)</name>
        <dbReference type="ChEBI" id="CHEBI:29105"/>
    </cofactor>
    <text evidence="7">Binds 1 zinc ion per subunit.</text>
</comment>
<comment type="activity regulation">
    <text evidence="5 6 7">Activated by Ca(2+)-bound calmodulin following an increase in intracellular Ca(2+) (PubMed:19154138, PubMed:25720963, PubMed:26794871). At low Ca(2+) concentrations, the catalytic subunit (also known as calcineurin A) is inactive and is bound to the regulatory subunit (also known as calcineurin B) in which only two high-affinity binding sites are occupied by Ca(2+) (PubMed:19154138, PubMed:26794871). In response to elevated calcium levels, the occupancy of the low-affinity sites on calcineurin B by Ca(2+) causes a conformational change of the C-terminal regulatory domain of calcineurin A, resulting in the exposure of the calmodulin-binding domain and in the partial activation of calcineurin A (PubMed:19154138, PubMed:26794871). The subsequent binding of Ca(2+)-bound calmodulin leads to the displacement of the autoinhibitory domain from the active site and possibly of the autoinhibitory segment from the substrate binding site which fully activates calcineurin A (PubMed:19154138, PubMed:26794871).</text>
</comment>
<comment type="biophysicochemical properties">
    <kinetics>
        <KM evidence="5">0.69 uM for NFATC1</KM>
        <KM evidence="5">0.7 uM for DARPP32</KM>
    </kinetics>
</comment>
<comment type="subunit">
    <text evidence="1 2 7 8 9">Forms a complex composed of a calmodulin-dependent catalytic subunit (also known as calcineurin A) and a regulatory Ca(2+)-binding subunit (also known as calcineurin B) (PubMed:26794871). There are three catalytic subunits, each encoded by a separate gene (PPP3CA, PPP3CB, and PPP3CC) and two regulatory subunits which are also encoded by separate genes (PPP3R1 and PPP3R2) (PubMed:26794871). In response to an increase in Ca(2+) intracellular levels, forms a complex composed of PPP3CB/calcineurin A, calcineurin B and calmodulin (PubMed:26794871). Interacts (via calcineurin B binding domain) with regulatory subunit PPP3R1/calcineurin B (PubMed:26794871). Interacts (via calmodulin-binding domain) with calmodulin; the interaction depends on calmodulin binding to Ca(2+) (PubMed:26794871). Interacts with SLC12A1 (By similarity). Interacts with SORL1 (By similarity). Interacts with UNC119 (By similarity). Interacts with MAP3K14/NIK (via C-terminus and kinase domain) (By similarity). Interacts with TRAF3 (By similarity). Interacts with SPATA33 (via PQIIIT motif) (PubMed:34446558). Interacts with IRGM; promoting its association with TFEB and TFEB dephosphorylation (PubMed:32753672).</text>
</comment>
<comment type="interaction">
    <interactant intactId="EBI-1759540">
        <id>P16298</id>
    </interactant>
    <interactant intactId="EBI-2866589">
        <id>P14316</id>
        <label>IRF2</label>
    </interactant>
    <organismsDiffer>false</organismsDiffer>
    <experiments>2</experiments>
</comment>
<comment type="interaction">
    <interactant intactId="EBI-1759540">
        <id>P16298</id>
    </interactant>
    <interactant intactId="EBI-1541887">
        <id>P53805</id>
        <label>RCAN1</label>
    </interactant>
    <organismsDiffer>false</organismsDiffer>
    <experiments>3</experiments>
</comment>
<comment type="interaction">
    <interactant intactId="EBI-1759540">
        <id>P16298</id>
    </interactant>
    <interactant intactId="EBI-6117042">
        <id>Q99J34</id>
        <label>Irak1</label>
    </interactant>
    <organismsDiffer>true</organismsDiffer>
    <experiments>2</experiments>
</comment>
<comment type="interaction">
    <interactant intactId="EBI-26442038">
        <id>P16298-4</id>
    </interactant>
    <interactant intactId="EBI-26429573">
        <id>Q96SQ7-1</id>
        <label>ATOH8</label>
    </interactant>
    <organismsDiffer>false</organismsDiffer>
    <experiments>5</experiments>
</comment>
<comment type="subcellular location">
    <subcellularLocation>
        <location evidence="5">Cytoplasm</location>
    </subcellularLocation>
</comment>
<comment type="alternative products">
    <event type="alternative splicing"/>
    <isoform>
        <id>P16298-1</id>
        <name>1</name>
        <sequence type="displayed"/>
    </isoform>
    <isoform>
        <id>P16298-2</id>
        <name>2</name>
        <sequence type="described" ref="VSP_005096 VSP_005097"/>
    </isoform>
    <isoform>
        <id>P16298-3</id>
        <name>3</name>
        <sequence type="described" ref="VSP_043803 VSP_012617"/>
    </isoform>
    <isoform>
        <id>P16298-4</id>
        <name>4</name>
        <sequence type="described" ref="VSP_043803"/>
    </isoform>
    <text>Additional isoforms seem to exist. Calcineurin A beta isoform consists of at least two isoenzymes that may result from alternative splicing events.</text>
</comment>
<comment type="domain">
    <text evidence="5">The poly-Pro domain may confer substrate specificity.</text>
</comment>
<comment type="domain">
    <text evidence="7">The autoinhibitory domain prevents access to the catalytic site.</text>
</comment>
<comment type="domain">
    <text evidence="7">The autoinhibitory segment prevents access to the substrate binding site.</text>
</comment>
<comment type="domain">
    <text evidence="3">Possible isomerization of Pro-318 within the SAPNY motif triggers a conformation switch which affects the organization and thus accessibility of the active site and the substrate binding region (PxIxIF motif). The trans- to cis-transition may favor calcineurin A activation and substrate binding. The reverse cis- to trans-transition may be enhanced by peptidyl-prolyl isomerases such as PPIA.</text>
</comment>
<comment type="miscellaneous">
    <text evidence="7">Unlike for protein substrates, PPP3CB activity towards synthetic phosphatase substrate p-nitrophenyl phosphate (pNPP) is increased in presence of the immunosuppressant complex FKBP12-FK506.</text>
</comment>
<comment type="similarity">
    <text evidence="13">Belongs to the PPP phosphatase family. PP-2B subfamily.</text>
</comment>
<gene>
    <name type="primary">PPP3CB</name>
    <name type="synonym">CALNA2</name>
    <name type="synonym">CALNB</name>
    <name type="synonym">CNA2</name>
</gene>
<proteinExistence type="evidence at protein level"/>
<evidence type="ECO:0000250" key="1">
    <source>
        <dbReference type="UniProtKB" id="P20651"/>
    </source>
</evidence>
<evidence type="ECO:0000250" key="2">
    <source>
        <dbReference type="UniProtKB" id="P48453"/>
    </source>
</evidence>
<evidence type="ECO:0000250" key="3">
    <source>
        <dbReference type="UniProtKB" id="Q08209"/>
    </source>
</evidence>
<evidence type="ECO:0000256" key="4">
    <source>
        <dbReference type="SAM" id="MobiDB-lite"/>
    </source>
</evidence>
<evidence type="ECO:0000269" key="5">
    <source>
    </source>
</evidence>
<evidence type="ECO:0000269" key="6">
    <source>
    </source>
</evidence>
<evidence type="ECO:0000269" key="7">
    <source>
    </source>
</evidence>
<evidence type="ECO:0000269" key="8">
    <source>
    </source>
</evidence>
<evidence type="ECO:0000269" key="9">
    <source>
    </source>
</evidence>
<evidence type="ECO:0000303" key="10">
    <source>
    </source>
</evidence>
<evidence type="ECO:0000303" key="11">
    <source>
    </source>
</evidence>
<evidence type="ECO:0000303" key="12">
    <source>
    </source>
</evidence>
<evidence type="ECO:0000305" key="13"/>
<evidence type="ECO:0000305" key="14">
    <source>
    </source>
</evidence>
<evidence type="ECO:0007744" key="15">
    <source>
        <dbReference type="PDB" id="4OR9"/>
    </source>
</evidence>
<evidence type="ECO:0007744" key="16">
    <source>
        <dbReference type="PDB" id="4ORA"/>
    </source>
</evidence>
<evidence type="ECO:0007744" key="17">
    <source>
        <dbReference type="PDB" id="4ORC"/>
    </source>
</evidence>
<evidence type="ECO:0007744" key="18">
    <source>
    </source>
</evidence>
<evidence type="ECO:0007829" key="19">
    <source>
        <dbReference type="PDB" id="4OR9"/>
    </source>
</evidence>
<evidence type="ECO:0007829" key="20">
    <source>
        <dbReference type="PDB" id="4ORA"/>
    </source>
</evidence>
<keyword id="KW-0002">3D-structure</keyword>
<keyword id="KW-0007">Acetylation</keyword>
<keyword id="KW-0025">Alternative splicing</keyword>
<keyword id="KW-0112">Calmodulin-binding</keyword>
<keyword id="KW-0963">Cytoplasm</keyword>
<keyword id="KW-0378">Hydrolase</keyword>
<keyword id="KW-0408">Iron</keyword>
<keyword id="KW-0479">Metal-binding</keyword>
<keyword id="KW-0597">Phosphoprotein</keyword>
<keyword id="KW-0904">Protein phosphatase</keyword>
<keyword id="KW-1267">Proteomics identification</keyword>
<keyword id="KW-1185">Reference proteome</keyword>
<keyword id="KW-0862">Zinc</keyword>
<organism>
    <name type="scientific">Homo sapiens</name>
    <name type="common">Human</name>
    <dbReference type="NCBI Taxonomy" id="9606"/>
    <lineage>
        <taxon>Eukaryota</taxon>
        <taxon>Metazoa</taxon>
        <taxon>Chordata</taxon>
        <taxon>Craniata</taxon>
        <taxon>Vertebrata</taxon>
        <taxon>Euteleostomi</taxon>
        <taxon>Mammalia</taxon>
        <taxon>Eutheria</taxon>
        <taxon>Euarchontoglires</taxon>
        <taxon>Primates</taxon>
        <taxon>Haplorrhini</taxon>
        <taxon>Catarrhini</taxon>
        <taxon>Hominidae</taxon>
        <taxon>Homo</taxon>
    </lineage>
</organism>
<reference key="1">
    <citation type="journal article" date="1989" name="Proc. Natl. Acad. Sci. U.S.A.">
        <title>Cloning of human calcineurin A: evidence for two isozymes and identification of a polyproline structural domain.</title>
        <authorList>
            <person name="Guerini D."/>
            <person name="Klee C.B."/>
        </authorList>
    </citation>
    <scope>NUCLEOTIDE SEQUENCE [MRNA] (ISOFORMS 1 AND 2)</scope>
</reference>
<reference key="2">
    <citation type="journal article" date="1991" name="Biochim. Biophys. Acta">
        <title>Identification of a third alternatively spliced cDNA encoding the catalytic subunit of protein phosphatase 2B beta.</title>
        <authorList>
            <person name="McPartlin A.E."/>
            <person name="Barker H.M."/>
            <person name="Cohen P.T.W."/>
        </authorList>
    </citation>
    <scope>NUCLEOTIDE SEQUENCE [MRNA] (ISOFORM 3)</scope>
    <source>
        <tissue>Teratocarcinoma</tissue>
    </source>
</reference>
<reference key="3">
    <citation type="journal article" date="2004" name="Nature">
        <title>The DNA sequence and comparative analysis of human chromosome 10.</title>
        <authorList>
            <person name="Deloukas P."/>
            <person name="Earthrowl M.E."/>
            <person name="Grafham D.V."/>
            <person name="Rubenfield M."/>
            <person name="French L."/>
            <person name="Steward C.A."/>
            <person name="Sims S.K."/>
            <person name="Jones M.C."/>
            <person name="Searle S."/>
            <person name="Scott C."/>
            <person name="Howe K."/>
            <person name="Hunt S.E."/>
            <person name="Andrews T.D."/>
            <person name="Gilbert J.G.R."/>
            <person name="Swarbreck D."/>
            <person name="Ashurst J.L."/>
            <person name="Taylor A."/>
            <person name="Battles J."/>
            <person name="Bird C.P."/>
            <person name="Ainscough R."/>
            <person name="Almeida J.P."/>
            <person name="Ashwell R.I.S."/>
            <person name="Ambrose K.D."/>
            <person name="Babbage A.K."/>
            <person name="Bagguley C.L."/>
            <person name="Bailey J."/>
            <person name="Banerjee R."/>
            <person name="Bates K."/>
            <person name="Beasley H."/>
            <person name="Bray-Allen S."/>
            <person name="Brown A.J."/>
            <person name="Brown J.Y."/>
            <person name="Burford D.C."/>
            <person name="Burrill W."/>
            <person name="Burton J."/>
            <person name="Cahill P."/>
            <person name="Camire D."/>
            <person name="Carter N.P."/>
            <person name="Chapman J.C."/>
            <person name="Clark S.Y."/>
            <person name="Clarke G."/>
            <person name="Clee C.M."/>
            <person name="Clegg S."/>
            <person name="Corby N."/>
            <person name="Coulson A."/>
            <person name="Dhami P."/>
            <person name="Dutta I."/>
            <person name="Dunn M."/>
            <person name="Faulkner L."/>
            <person name="Frankish A."/>
            <person name="Frankland J.A."/>
            <person name="Garner P."/>
            <person name="Garnett J."/>
            <person name="Gribble S."/>
            <person name="Griffiths C."/>
            <person name="Grocock R."/>
            <person name="Gustafson E."/>
            <person name="Hammond S."/>
            <person name="Harley J.L."/>
            <person name="Hart E."/>
            <person name="Heath P.D."/>
            <person name="Ho T.P."/>
            <person name="Hopkins B."/>
            <person name="Horne J."/>
            <person name="Howden P.J."/>
            <person name="Huckle E."/>
            <person name="Hynds C."/>
            <person name="Johnson C."/>
            <person name="Johnson D."/>
            <person name="Kana A."/>
            <person name="Kay M."/>
            <person name="Kimberley A.M."/>
            <person name="Kershaw J.K."/>
            <person name="Kokkinaki M."/>
            <person name="Laird G.K."/>
            <person name="Lawlor S."/>
            <person name="Lee H.M."/>
            <person name="Leongamornlert D.A."/>
            <person name="Laird G."/>
            <person name="Lloyd C."/>
            <person name="Lloyd D.M."/>
            <person name="Loveland J."/>
            <person name="Lovell J."/>
            <person name="McLaren S."/>
            <person name="McLay K.E."/>
            <person name="McMurray A."/>
            <person name="Mashreghi-Mohammadi M."/>
            <person name="Matthews L."/>
            <person name="Milne S."/>
            <person name="Nickerson T."/>
            <person name="Nguyen M."/>
            <person name="Overton-Larty E."/>
            <person name="Palmer S.A."/>
            <person name="Pearce A.V."/>
            <person name="Peck A.I."/>
            <person name="Pelan S."/>
            <person name="Phillimore B."/>
            <person name="Porter K."/>
            <person name="Rice C.M."/>
            <person name="Rogosin A."/>
            <person name="Ross M.T."/>
            <person name="Sarafidou T."/>
            <person name="Sehra H.K."/>
            <person name="Shownkeen R."/>
            <person name="Skuce C.D."/>
            <person name="Smith M."/>
            <person name="Standring L."/>
            <person name="Sycamore N."/>
            <person name="Tester J."/>
            <person name="Thorpe A."/>
            <person name="Torcasso W."/>
            <person name="Tracey A."/>
            <person name="Tromans A."/>
            <person name="Tsolas J."/>
            <person name="Wall M."/>
            <person name="Walsh J."/>
            <person name="Wang H."/>
            <person name="Weinstock K."/>
            <person name="West A.P."/>
            <person name="Willey D.L."/>
            <person name="Whitehead S.L."/>
            <person name="Wilming L."/>
            <person name="Wray P.W."/>
            <person name="Young L."/>
            <person name="Chen Y."/>
            <person name="Lovering R.C."/>
            <person name="Moschonas N.K."/>
            <person name="Siebert R."/>
            <person name="Fechtel K."/>
            <person name="Bentley D."/>
            <person name="Durbin R.M."/>
            <person name="Hubbard T."/>
            <person name="Doucette-Stamm L."/>
            <person name="Beck S."/>
            <person name="Smith D.R."/>
            <person name="Rogers J."/>
        </authorList>
    </citation>
    <scope>NUCLEOTIDE SEQUENCE [LARGE SCALE GENOMIC DNA]</scope>
</reference>
<reference key="4">
    <citation type="submission" date="2005-07" db="EMBL/GenBank/DDBJ databases">
        <authorList>
            <person name="Mural R.J."/>
            <person name="Istrail S."/>
            <person name="Sutton G.G."/>
            <person name="Florea L."/>
            <person name="Halpern A.L."/>
            <person name="Mobarry C.M."/>
            <person name="Lippert R."/>
            <person name="Walenz B."/>
            <person name="Shatkay H."/>
            <person name="Dew I."/>
            <person name="Miller J.R."/>
            <person name="Flanigan M.J."/>
            <person name="Edwards N.J."/>
            <person name="Bolanos R."/>
            <person name="Fasulo D."/>
            <person name="Halldorsson B.V."/>
            <person name="Hannenhalli S."/>
            <person name="Turner R."/>
            <person name="Yooseph S."/>
            <person name="Lu F."/>
            <person name="Nusskern D.R."/>
            <person name="Shue B.C."/>
            <person name="Zheng X.H."/>
            <person name="Zhong F."/>
            <person name="Delcher A.L."/>
            <person name="Huson D.H."/>
            <person name="Kravitz S.A."/>
            <person name="Mouchard L."/>
            <person name="Reinert K."/>
            <person name="Remington K.A."/>
            <person name="Clark A.G."/>
            <person name="Waterman M.S."/>
            <person name="Eichler E.E."/>
            <person name="Adams M.D."/>
            <person name="Hunkapiller M.W."/>
            <person name="Myers E.W."/>
            <person name="Venter J.C."/>
        </authorList>
    </citation>
    <scope>NUCLEOTIDE SEQUENCE [LARGE SCALE GENOMIC DNA]</scope>
</reference>
<reference key="5">
    <citation type="journal article" date="2004" name="Genome Res.">
        <title>The status, quality, and expansion of the NIH full-length cDNA project: the Mammalian Gene Collection (MGC).</title>
        <authorList>
            <consortium name="The MGC Project Team"/>
        </authorList>
    </citation>
    <scope>NUCLEOTIDE SEQUENCE [LARGE SCALE MRNA] (ISOFORM 4)</scope>
    <source>
        <tissue>Testis</tissue>
    </source>
</reference>
<reference key="6">
    <citation type="journal article" date="2009" name="Anal. Chem.">
        <title>Lys-N and trypsin cover complementary parts of the phosphoproteome in a refined SCX-based approach.</title>
        <authorList>
            <person name="Gauci S."/>
            <person name="Helbig A.O."/>
            <person name="Slijper M."/>
            <person name="Krijgsveld J."/>
            <person name="Heck A.J."/>
            <person name="Mohammed S."/>
        </authorList>
    </citation>
    <scope>ACETYLATION [LARGE SCALE ANALYSIS] AT ALA-2</scope>
    <scope>CLEAVAGE OF INITIATOR METHIONINE [LARGE SCALE ANALYSIS]</scope>
    <scope>IDENTIFICATION BY MASS SPECTROMETRY [LARGE SCALE ANALYSIS]</scope>
</reference>
<reference key="7">
    <citation type="journal article" date="2009" name="Biochemistry">
        <title>The proline-rich N-terminal sequence of calcineurin Abeta determines substrate binding.</title>
        <authorList>
            <person name="Kilka S."/>
            <person name="Erdmann F."/>
            <person name="Migdoll A."/>
            <person name="Fischer G."/>
            <person name="Weiwad M."/>
        </authorList>
    </citation>
    <scope>FUNCTION</scope>
    <scope>CATALYTIC ACTIVITY</scope>
    <scope>ACTIVITY REGULATION</scope>
    <scope>BIOPHYSICOCHEMICAL PROPERTIES</scope>
    <scope>SUBCELLULAR LOCATION</scope>
    <scope>MUTAGENESIS OF 2-ALA--PRO-21</scope>
</reference>
<reference key="8">
    <citation type="journal article" date="2015" name="Nat. Cell Biol.">
        <title>Lysosomal calcium signalling regulates autophagy through calcineurin and TFEB.</title>
        <authorList>
            <person name="Medina D.L."/>
            <person name="Di Paola S."/>
            <person name="Peluso I."/>
            <person name="Armani A."/>
            <person name="De Stefani D."/>
            <person name="Venditti R."/>
            <person name="Montefusco S."/>
            <person name="Scotto-Rosato A."/>
            <person name="Prezioso C."/>
            <person name="Forrester A."/>
            <person name="Settembre C."/>
            <person name="Wang W."/>
            <person name="Gao Q."/>
            <person name="Xu H."/>
            <person name="Sandri M."/>
            <person name="Rizzuto R."/>
            <person name="De Matteis M.A."/>
            <person name="Ballabio A."/>
        </authorList>
    </citation>
    <scope>FUNCTION</scope>
    <scope>CATALYTIC ACTIVITY</scope>
    <scope>ACTIVITY REGULATION</scope>
</reference>
<reference key="9">
    <citation type="journal article" date="2020" name="Nat. Cell Biol.">
        <title>Mammalian Atg8 proteins and the autophagy factor IRGM control mTOR and TFEB at a regulatory node critical for responses to pathogens.</title>
        <authorList>
            <person name="Kumar S."/>
            <person name="Jain A."/>
            <person name="Choi S.W."/>
            <person name="da Silva G.P.D."/>
            <person name="Allers L."/>
            <person name="Mudd M.H."/>
            <person name="Peters R.S."/>
            <person name="Anonsen J.H."/>
            <person name="Rusten T.E."/>
            <person name="Lazarou M."/>
            <person name="Deretic V."/>
        </authorList>
    </citation>
    <scope>FUNCTION</scope>
    <scope>CATALYTIC ACTIVITY</scope>
    <scope>INTERACTION WITH IRGM</scope>
</reference>
<reference key="10">
    <citation type="journal article" date="2021" name="Proc. Natl. Acad. Sci. U.S.A.">
        <title>SPATA33 localizes calcineurin to the mitochondria and regulates sperm motility in mice.</title>
        <authorList>
            <person name="Miyata H."/>
            <person name="Oura S."/>
            <person name="Morohoshi A."/>
            <person name="Shimada K."/>
            <person name="Mashiko D."/>
            <person name="Oyama Y."/>
            <person name="Kaneda Y."/>
            <person name="Matsumura T."/>
            <person name="Abbasi F."/>
            <person name="Ikawa M."/>
        </authorList>
    </citation>
    <scope>INTERACTION WITH SPATA33</scope>
</reference>
<reference key="11">
    <citation type="journal article" date="2016" name="Cell Res.">
        <title>Cooperative autoinhibition and multi-level activation mechanisms of calcineurin.</title>
        <authorList>
            <person name="Li S.J."/>
            <person name="Wang J."/>
            <person name="Ma L."/>
            <person name="Lu C."/>
            <person name="Wang J."/>
            <person name="Wu J.W."/>
            <person name="Wang Z.X."/>
        </authorList>
    </citation>
    <scope>X-RAY CRYSTALLOGRAPHY (2.23 ANGSTROMS) IN COMPLEX WITH PPP3R1; IRON AND ZINC</scope>
    <scope>FUNCTION</scope>
    <scope>CATALYTIC ACTIVITY</scope>
    <scope>ACTIVITY REGULATION</scope>
    <scope>INTERACTION WITH CALMODULIN</scope>
    <scope>MUTAGENESIS OF LEU-352; PRO-353; MET-356; 357-ASP--GLN-524; TRP-361; PHE-365; 397-SER--GLN-524; 415-MET--GLN-524; ARG-417; VAL-418; PHE-419; SER-420; VAL-421; LEU-422; ARG-423 AND 451-GLN--GLN-524</scope>
</reference>
<protein>
    <recommendedName>
        <fullName>Serine/threonine-protein phosphatase 2B catalytic subunit beta isoform</fullName>
        <ecNumber evidence="5 7">3.1.3.16</ecNumber>
    </recommendedName>
    <alternativeName>
        <fullName>CAM-PRP catalytic subunit</fullName>
    </alternativeName>
    <alternativeName>
        <fullName>Calmodulin-dependent calcineurin A subunit beta isoform</fullName>
        <shortName evidence="14">CNA beta</shortName>
    </alternativeName>
</protein>
<dbReference type="EC" id="3.1.3.16" evidence="5 7"/>
<dbReference type="EMBL" id="M29551">
    <property type="protein sequence ID" value="AAA35706.1"/>
    <property type="molecule type" value="mRNA"/>
</dbReference>
<dbReference type="EMBL" id="M29550">
    <property type="protein sequence ID" value="AAA35705.1"/>
    <property type="molecule type" value="mRNA"/>
</dbReference>
<dbReference type="EMBL" id="AJ488506">
    <property type="protein sequence ID" value="CAD32694.1"/>
    <property type="molecule type" value="mRNA"/>
</dbReference>
<dbReference type="EMBL" id="AL353731">
    <property type="status" value="NOT_ANNOTATED_CDS"/>
    <property type="molecule type" value="Genomic_DNA"/>
</dbReference>
<dbReference type="EMBL" id="AL359074">
    <property type="status" value="NOT_ANNOTATED_CDS"/>
    <property type="molecule type" value="Genomic_DNA"/>
</dbReference>
<dbReference type="EMBL" id="CH471083">
    <property type="protein sequence ID" value="EAW54497.1"/>
    <property type="molecule type" value="Genomic_DNA"/>
</dbReference>
<dbReference type="EMBL" id="CH471083">
    <property type="protein sequence ID" value="EAW54498.1"/>
    <property type="molecule type" value="Genomic_DNA"/>
</dbReference>
<dbReference type="EMBL" id="BC028049">
    <property type="protein sequence ID" value="AAH28049.1"/>
    <property type="molecule type" value="mRNA"/>
</dbReference>
<dbReference type="CCDS" id="CCDS44436.1">
    <molecule id="P16298-3"/>
</dbReference>
<dbReference type="CCDS" id="CCDS44437.1">
    <molecule id="P16298-4"/>
</dbReference>
<dbReference type="CCDS" id="CCDS7328.1">
    <molecule id="P16298-1"/>
</dbReference>
<dbReference type="PIR" id="A36222">
    <property type="entry name" value="A36222"/>
</dbReference>
<dbReference type="PIR" id="B36222">
    <property type="entry name" value="B36222"/>
</dbReference>
<dbReference type="RefSeq" id="NP_001135825.1">
    <molecule id="P16298-4"/>
    <property type="nucleotide sequence ID" value="NM_001142353.3"/>
</dbReference>
<dbReference type="RefSeq" id="NP_001135826.1">
    <molecule id="P16298-3"/>
    <property type="nucleotide sequence ID" value="NM_001142354.3"/>
</dbReference>
<dbReference type="RefSeq" id="NP_001276897.1">
    <molecule id="P16298-2"/>
    <property type="nucleotide sequence ID" value="NM_001289968.2"/>
</dbReference>
<dbReference type="RefSeq" id="NP_001276898.1">
    <property type="nucleotide sequence ID" value="NM_001289969.1"/>
</dbReference>
<dbReference type="RefSeq" id="NP_066955.1">
    <molecule id="P16298-1"/>
    <property type="nucleotide sequence ID" value="NM_021132.4"/>
</dbReference>
<dbReference type="PDB" id="4OR9">
    <property type="method" value="X-ray"/>
    <property type="resolution" value="2.23 A"/>
    <property type="chains" value="A=1-524"/>
</dbReference>
<dbReference type="PDB" id="4ORA">
    <property type="method" value="X-ray"/>
    <property type="resolution" value="2.75 A"/>
    <property type="chains" value="A=1-524"/>
</dbReference>
<dbReference type="PDB" id="4ORC">
    <property type="method" value="X-ray"/>
    <property type="resolution" value="2.70 A"/>
    <property type="chains" value="A=1-524"/>
</dbReference>
<dbReference type="PDBsum" id="4OR9"/>
<dbReference type="PDBsum" id="4ORA"/>
<dbReference type="PDBsum" id="4ORC"/>
<dbReference type="SMR" id="P16298"/>
<dbReference type="BioGRID" id="111524">
    <property type="interactions" value="93"/>
</dbReference>
<dbReference type="ComplexPortal" id="CPX-1002">
    <property type="entry name" value="Calcineurin-Calmodulin complex, beta-R2 variant"/>
</dbReference>
<dbReference type="ComplexPortal" id="CPX-1009">
    <property type="entry name" value="Calcineurin-Calmodulin complex, beta-R1 variant"/>
</dbReference>
<dbReference type="ComplexPortal" id="CPX-1116">
    <property type="entry name" value="Calcineurin-Calmodulin-AKAP5 complex, beta-R2 variant"/>
</dbReference>
<dbReference type="ComplexPortal" id="CPX-998">
    <property type="entry name" value="Calcineurin-Calmodulin-AKAP5 complex, beta-R1 variant"/>
</dbReference>
<dbReference type="CORUM" id="P16298"/>
<dbReference type="DIP" id="DIP-52337N"/>
<dbReference type="FunCoup" id="P16298">
    <property type="interactions" value="2617"/>
</dbReference>
<dbReference type="IntAct" id="P16298">
    <property type="interactions" value="58"/>
</dbReference>
<dbReference type="MINT" id="P16298"/>
<dbReference type="STRING" id="9606.ENSP00000378306"/>
<dbReference type="BindingDB" id="P16298"/>
<dbReference type="ChEMBL" id="CHEMBL5278"/>
<dbReference type="DEPOD" id="PPP3CB"/>
<dbReference type="GlyGen" id="P16298">
    <property type="glycosylation" value="1 site, 1 N-linked glycan (1 site)"/>
</dbReference>
<dbReference type="iPTMnet" id="P16298"/>
<dbReference type="PhosphoSitePlus" id="P16298"/>
<dbReference type="SwissPalm" id="P16298"/>
<dbReference type="BioMuta" id="PPP3CB"/>
<dbReference type="DMDM" id="60659599"/>
<dbReference type="jPOST" id="P16298"/>
<dbReference type="MassIVE" id="P16298"/>
<dbReference type="PaxDb" id="9606-ENSP00000378306"/>
<dbReference type="PeptideAtlas" id="P16298"/>
<dbReference type="ProteomicsDB" id="53341">
    <molecule id="P16298-1"/>
</dbReference>
<dbReference type="ProteomicsDB" id="53342">
    <molecule id="P16298-2"/>
</dbReference>
<dbReference type="ProteomicsDB" id="53343">
    <molecule id="P16298-3"/>
</dbReference>
<dbReference type="ProteomicsDB" id="53344">
    <molecule id="P16298-4"/>
</dbReference>
<dbReference type="Pumba" id="P16298"/>
<dbReference type="Antibodypedia" id="1918">
    <property type="antibodies" value="208 antibodies from 36 providers"/>
</dbReference>
<dbReference type="DNASU" id="5532"/>
<dbReference type="Ensembl" id="ENST00000360663.10">
    <molecule id="P16298-1"/>
    <property type="protein sequence ID" value="ENSP00000353881.5"/>
    <property type="gene ID" value="ENSG00000107758.16"/>
</dbReference>
<dbReference type="Ensembl" id="ENST00000394828.6">
    <molecule id="P16298-3"/>
    <property type="protein sequence ID" value="ENSP00000378305.2"/>
    <property type="gene ID" value="ENSG00000107758.16"/>
</dbReference>
<dbReference type="Ensembl" id="ENST00000394829.6">
    <molecule id="P16298-4"/>
    <property type="protein sequence ID" value="ENSP00000378306.2"/>
    <property type="gene ID" value="ENSG00000107758.16"/>
</dbReference>
<dbReference type="GeneID" id="5532"/>
<dbReference type="KEGG" id="hsa:5532"/>
<dbReference type="MANE-Select" id="ENST00000360663.10">
    <property type="protein sequence ID" value="ENSP00000353881.5"/>
    <property type="RefSeq nucleotide sequence ID" value="NM_021132.4"/>
    <property type="RefSeq protein sequence ID" value="NP_066955.1"/>
</dbReference>
<dbReference type="UCSC" id="uc001jue.4">
    <molecule id="P16298-1"/>
    <property type="organism name" value="human"/>
</dbReference>
<dbReference type="AGR" id="HGNC:9315"/>
<dbReference type="CTD" id="5532"/>
<dbReference type="DisGeNET" id="5532"/>
<dbReference type="GeneCards" id="PPP3CB"/>
<dbReference type="HGNC" id="HGNC:9315">
    <property type="gene designation" value="PPP3CB"/>
</dbReference>
<dbReference type="HPA" id="ENSG00000107758">
    <property type="expression patterns" value="Tissue enhanced (skeletal)"/>
</dbReference>
<dbReference type="MIM" id="114106">
    <property type="type" value="gene"/>
</dbReference>
<dbReference type="neXtProt" id="NX_P16298"/>
<dbReference type="OpenTargets" id="ENSG00000107758"/>
<dbReference type="PharmGKB" id="PA33679"/>
<dbReference type="VEuPathDB" id="HostDB:ENSG00000107758"/>
<dbReference type="eggNOG" id="KOG0375">
    <property type="taxonomic scope" value="Eukaryota"/>
</dbReference>
<dbReference type="GeneTree" id="ENSGT00940000154115"/>
<dbReference type="InParanoid" id="P16298"/>
<dbReference type="OMA" id="PSHGLMC"/>
<dbReference type="OrthoDB" id="5593063at2759"/>
<dbReference type="PAN-GO" id="P16298">
    <property type="GO annotations" value="5 GO annotations based on evolutionary models"/>
</dbReference>
<dbReference type="TreeFam" id="TF105557"/>
<dbReference type="PathwayCommons" id="P16298"/>
<dbReference type="Reactome" id="R-HSA-180024">
    <property type="pathway name" value="DARPP-32 events"/>
</dbReference>
<dbReference type="Reactome" id="R-HSA-2025928">
    <property type="pathway name" value="Calcineurin activates NFAT"/>
</dbReference>
<dbReference type="Reactome" id="R-HSA-2871809">
    <property type="pathway name" value="FCERI mediated Ca+2 mobilization"/>
</dbReference>
<dbReference type="Reactome" id="R-HSA-4086398">
    <property type="pathway name" value="Ca2+ pathway"/>
</dbReference>
<dbReference type="Reactome" id="R-HSA-5607763">
    <property type="pathway name" value="CLEC7A (Dectin-1) induces NFAT activation"/>
</dbReference>
<dbReference type="Reactome" id="R-HSA-9010642">
    <property type="pathway name" value="ROBO receptors bind AKAP5"/>
</dbReference>
<dbReference type="SignaLink" id="P16298"/>
<dbReference type="SIGNOR" id="P16298"/>
<dbReference type="BioGRID-ORCS" id="5532">
    <property type="hits" value="69 hits in 1172 CRISPR screens"/>
</dbReference>
<dbReference type="CD-CODE" id="FB4E32DD">
    <property type="entry name" value="Presynaptic clusters and postsynaptic densities"/>
</dbReference>
<dbReference type="ChiTaRS" id="PPP3CB">
    <property type="organism name" value="human"/>
</dbReference>
<dbReference type="EvolutionaryTrace" id="P16298"/>
<dbReference type="GeneWiki" id="PPP3CB"/>
<dbReference type="GenomeRNAi" id="5532"/>
<dbReference type="Pharos" id="P16298">
    <property type="development level" value="Tbio"/>
</dbReference>
<dbReference type="PRO" id="PR:P16298"/>
<dbReference type="Proteomes" id="UP000005640">
    <property type="component" value="Chromosome 10"/>
</dbReference>
<dbReference type="RNAct" id="P16298">
    <property type="molecule type" value="protein"/>
</dbReference>
<dbReference type="Bgee" id="ENSG00000107758">
    <property type="expression patterns" value="Expressed in endothelial cell and 218 other cell types or tissues"/>
</dbReference>
<dbReference type="ExpressionAtlas" id="P16298">
    <property type="expression patterns" value="baseline and differential"/>
</dbReference>
<dbReference type="GO" id="GO:0005955">
    <property type="term" value="C:calcineurin complex"/>
    <property type="evidence" value="ECO:0000314"/>
    <property type="project" value="UniProtKB"/>
</dbReference>
<dbReference type="GO" id="GO:0005737">
    <property type="term" value="C:cytoplasm"/>
    <property type="evidence" value="ECO:0000314"/>
    <property type="project" value="UniProtKB"/>
</dbReference>
<dbReference type="GO" id="GO:0005829">
    <property type="term" value="C:cytosol"/>
    <property type="evidence" value="ECO:0000304"/>
    <property type="project" value="Reactome"/>
</dbReference>
<dbReference type="GO" id="GO:0098978">
    <property type="term" value="C:glutamatergic synapse"/>
    <property type="evidence" value="ECO:0007669"/>
    <property type="project" value="Ensembl"/>
</dbReference>
<dbReference type="GO" id="GO:0005654">
    <property type="term" value="C:nucleoplasm"/>
    <property type="evidence" value="ECO:0000304"/>
    <property type="project" value="Reactome"/>
</dbReference>
<dbReference type="GO" id="GO:0005886">
    <property type="term" value="C:plasma membrane"/>
    <property type="evidence" value="ECO:0000250"/>
    <property type="project" value="UniProtKB"/>
</dbReference>
<dbReference type="GO" id="GO:0008287">
    <property type="term" value="C:protein serine/threonine phosphatase complex"/>
    <property type="evidence" value="ECO:0000303"/>
    <property type="project" value="ComplexPortal"/>
</dbReference>
<dbReference type="GO" id="GO:0030315">
    <property type="term" value="C:T-tubule"/>
    <property type="evidence" value="ECO:0007669"/>
    <property type="project" value="Ensembl"/>
</dbReference>
<dbReference type="GO" id="GO:0030018">
    <property type="term" value="C:Z disc"/>
    <property type="evidence" value="ECO:0007669"/>
    <property type="project" value="Ensembl"/>
</dbReference>
<dbReference type="GO" id="GO:0005509">
    <property type="term" value="F:calcium ion binding"/>
    <property type="evidence" value="ECO:0000314"/>
    <property type="project" value="UniProtKB"/>
</dbReference>
<dbReference type="GO" id="GO:0005516">
    <property type="term" value="F:calmodulin binding"/>
    <property type="evidence" value="ECO:0000314"/>
    <property type="project" value="UniProtKB"/>
</dbReference>
<dbReference type="GO" id="GO:0033192">
    <property type="term" value="F:calmodulin-dependent protein phosphatase activity"/>
    <property type="evidence" value="ECO:0000314"/>
    <property type="project" value="UniProtKB"/>
</dbReference>
<dbReference type="GO" id="GO:0019899">
    <property type="term" value="F:enzyme binding"/>
    <property type="evidence" value="ECO:0000314"/>
    <property type="project" value="UniProtKB"/>
</dbReference>
<dbReference type="GO" id="GO:0046983">
    <property type="term" value="F:protein dimerization activity"/>
    <property type="evidence" value="ECO:0000353"/>
    <property type="project" value="UniProtKB"/>
</dbReference>
<dbReference type="GO" id="GO:0030346">
    <property type="term" value="F:protein phosphatase 2B binding"/>
    <property type="evidence" value="ECO:0000314"/>
    <property type="project" value="UniProtKB"/>
</dbReference>
<dbReference type="GO" id="GO:0004722">
    <property type="term" value="F:protein serine/threonine phosphatase activity"/>
    <property type="evidence" value="ECO:0000303"/>
    <property type="project" value="UniProtKB"/>
</dbReference>
<dbReference type="GO" id="GO:0048675">
    <property type="term" value="P:axon extension"/>
    <property type="evidence" value="ECO:0000304"/>
    <property type="project" value="UniProtKB"/>
</dbReference>
<dbReference type="GO" id="GO:0097720">
    <property type="term" value="P:calcineurin-mediated signaling"/>
    <property type="evidence" value="ECO:0000315"/>
    <property type="project" value="UniProtKB"/>
</dbReference>
<dbReference type="GO" id="GO:0033173">
    <property type="term" value="P:calcineurin-NFAT signaling cascade"/>
    <property type="evidence" value="ECO:0000314"/>
    <property type="project" value="UniProtKB"/>
</dbReference>
<dbReference type="GO" id="GO:0017156">
    <property type="term" value="P:calcium-ion regulated exocytosis"/>
    <property type="evidence" value="ECO:0000250"/>
    <property type="project" value="UniProtKB"/>
</dbReference>
<dbReference type="GO" id="GO:0016311">
    <property type="term" value="P:dephosphorylation"/>
    <property type="evidence" value="ECO:0000304"/>
    <property type="project" value="UniProtKB"/>
</dbReference>
<dbReference type="GO" id="GO:0007507">
    <property type="term" value="P:heart development"/>
    <property type="evidence" value="ECO:0007669"/>
    <property type="project" value="Ensembl"/>
</dbReference>
<dbReference type="GO" id="GO:0007612">
    <property type="term" value="P:learning"/>
    <property type="evidence" value="ECO:0000304"/>
    <property type="project" value="UniProtKB"/>
</dbReference>
<dbReference type="GO" id="GO:0031987">
    <property type="term" value="P:locomotion involved in locomotory behavior"/>
    <property type="evidence" value="ECO:0007669"/>
    <property type="project" value="Ensembl"/>
</dbReference>
<dbReference type="GO" id="GO:0001946">
    <property type="term" value="P:lymphangiogenesis"/>
    <property type="evidence" value="ECO:0007669"/>
    <property type="project" value="Ensembl"/>
</dbReference>
<dbReference type="GO" id="GO:0007613">
    <property type="term" value="P:memory"/>
    <property type="evidence" value="ECO:0000304"/>
    <property type="project" value="UniProtKB"/>
</dbReference>
<dbReference type="GO" id="GO:1905949">
    <property type="term" value="P:negative regulation of calcium ion import across plasma membrane"/>
    <property type="evidence" value="ECO:0000303"/>
    <property type="project" value="ComplexPortal"/>
</dbReference>
<dbReference type="GO" id="GO:0023057">
    <property type="term" value="P:negative regulation of signaling"/>
    <property type="evidence" value="ECO:0000250"/>
    <property type="project" value="UniProtKB"/>
</dbReference>
<dbReference type="GO" id="GO:0001915">
    <property type="term" value="P:negative regulation of T cell mediated cytotoxicity"/>
    <property type="evidence" value="ECO:0007669"/>
    <property type="project" value="Ensembl"/>
</dbReference>
<dbReference type="GO" id="GO:0070886">
    <property type="term" value="P:positive regulation of calcineurin-NFAT signaling cascade"/>
    <property type="evidence" value="ECO:0000303"/>
    <property type="project" value="ComplexPortal"/>
</dbReference>
<dbReference type="GO" id="GO:1905665">
    <property type="term" value="P:positive regulation of calcium ion import across plasma membrane"/>
    <property type="evidence" value="ECO:0000303"/>
    <property type="project" value="ComplexPortal"/>
</dbReference>
<dbReference type="GO" id="GO:0045893">
    <property type="term" value="P:positive regulation of DNA-templated transcription"/>
    <property type="evidence" value="ECO:0000303"/>
    <property type="project" value="UniProtKB"/>
</dbReference>
<dbReference type="GO" id="GO:0035774">
    <property type="term" value="P:positive regulation of insulin secretion involved in cellular response to glucose stimulus"/>
    <property type="evidence" value="ECO:0000250"/>
    <property type="project" value="UniProtKB"/>
</dbReference>
<dbReference type="GO" id="GO:1905673">
    <property type="term" value="P:positive regulation of lysosome organization"/>
    <property type="evidence" value="ECO:0000314"/>
    <property type="project" value="UniProt"/>
</dbReference>
<dbReference type="GO" id="GO:1900182">
    <property type="term" value="P:positive regulation of protein localization to nucleus"/>
    <property type="evidence" value="ECO:0000314"/>
    <property type="project" value="UniProt"/>
</dbReference>
<dbReference type="GO" id="GO:0045944">
    <property type="term" value="P:positive regulation of transcription by RNA polymerase II"/>
    <property type="evidence" value="ECO:0000314"/>
    <property type="project" value="BHF-UCL"/>
</dbReference>
<dbReference type="GO" id="GO:0006470">
    <property type="term" value="P:protein dephosphorylation"/>
    <property type="evidence" value="ECO:0000314"/>
    <property type="project" value="UniProtKB"/>
</dbReference>
<dbReference type="GO" id="GO:0006468">
    <property type="term" value="P:protein phosphorylation"/>
    <property type="evidence" value="ECO:0000250"/>
    <property type="project" value="UniProtKB"/>
</dbReference>
<dbReference type="GO" id="GO:0050796">
    <property type="term" value="P:regulation of insulin secretion"/>
    <property type="evidence" value="ECO:0000250"/>
    <property type="project" value="UniProtKB"/>
</dbReference>
<dbReference type="GO" id="GO:0048167">
    <property type="term" value="P:regulation of synaptic plasticity"/>
    <property type="evidence" value="ECO:0000304"/>
    <property type="project" value="UniProtKB"/>
</dbReference>
<dbReference type="GO" id="GO:1900242">
    <property type="term" value="P:regulation of synaptic vesicle endocytosis"/>
    <property type="evidence" value="ECO:0007669"/>
    <property type="project" value="Ensembl"/>
</dbReference>
<dbReference type="GO" id="GO:0034097">
    <property type="term" value="P:response to cytokine"/>
    <property type="evidence" value="ECO:0007669"/>
    <property type="project" value="Ensembl"/>
</dbReference>
<dbReference type="GO" id="GO:0006950">
    <property type="term" value="P:response to stress"/>
    <property type="evidence" value="ECO:0007669"/>
    <property type="project" value="Ensembl"/>
</dbReference>
<dbReference type="GO" id="GO:0007165">
    <property type="term" value="P:signal transduction"/>
    <property type="evidence" value="ECO:0000303"/>
    <property type="project" value="UniProtKB"/>
</dbReference>
<dbReference type="GO" id="GO:0048741">
    <property type="term" value="P:skeletal muscle fiber development"/>
    <property type="evidence" value="ECO:0000250"/>
    <property type="project" value="UniProtKB"/>
</dbReference>
<dbReference type="GO" id="GO:0042110">
    <property type="term" value="P:T cell activation"/>
    <property type="evidence" value="ECO:0000304"/>
    <property type="project" value="UniProtKB"/>
</dbReference>
<dbReference type="GO" id="GO:0030217">
    <property type="term" value="P:T cell differentiation"/>
    <property type="evidence" value="ECO:0007669"/>
    <property type="project" value="Ensembl"/>
</dbReference>
<dbReference type="GO" id="GO:0043029">
    <property type="term" value="P:T cell homeostasis"/>
    <property type="evidence" value="ECO:0007669"/>
    <property type="project" value="Ensembl"/>
</dbReference>
<dbReference type="GO" id="GO:0001913">
    <property type="term" value="P:T cell mediated cytotoxicity"/>
    <property type="evidence" value="ECO:0007669"/>
    <property type="project" value="Ensembl"/>
</dbReference>
<dbReference type="GO" id="GO:0042098">
    <property type="term" value="P:T cell proliferation"/>
    <property type="evidence" value="ECO:0000303"/>
    <property type="project" value="UniProtKB"/>
</dbReference>
<dbReference type="CDD" id="cd07416">
    <property type="entry name" value="MPP_PP2B"/>
    <property type="match status" value="1"/>
</dbReference>
<dbReference type="FunFam" id="3.60.21.10:FF:000002">
    <property type="entry name" value="Serine/threonine-protein phosphatase"/>
    <property type="match status" value="1"/>
</dbReference>
<dbReference type="Gene3D" id="3.60.21.10">
    <property type="match status" value="1"/>
</dbReference>
<dbReference type="InterPro" id="IPR004843">
    <property type="entry name" value="Calcineurin-like_PHP_ApaH"/>
</dbReference>
<dbReference type="InterPro" id="IPR029052">
    <property type="entry name" value="Metallo-depent_PP-like"/>
</dbReference>
<dbReference type="InterPro" id="IPR041751">
    <property type="entry name" value="MPP_PP2B"/>
</dbReference>
<dbReference type="InterPro" id="IPR043360">
    <property type="entry name" value="PP2B"/>
</dbReference>
<dbReference type="InterPro" id="IPR006186">
    <property type="entry name" value="Ser/Thr-sp_prot-phosphatase"/>
</dbReference>
<dbReference type="PANTHER" id="PTHR45673">
    <property type="entry name" value="SERINE/THREONINE-PROTEIN PHOSPHATASE 2B CATALYTIC SUBUNIT 1-RELATED"/>
    <property type="match status" value="1"/>
</dbReference>
<dbReference type="Pfam" id="PF00149">
    <property type="entry name" value="Metallophos"/>
    <property type="match status" value="1"/>
</dbReference>
<dbReference type="PRINTS" id="PR00114">
    <property type="entry name" value="STPHPHTASE"/>
</dbReference>
<dbReference type="SMART" id="SM00156">
    <property type="entry name" value="PP2Ac"/>
    <property type="match status" value="1"/>
</dbReference>
<dbReference type="SUPFAM" id="SSF101447">
    <property type="entry name" value="Formin homology 2 domain (FH2 domain)"/>
    <property type="match status" value="1"/>
</dbReference>
<dbReference type="SUPFAM" id="SSF56300">
    <property type="entry name" value="Metallo-dependent phosphatases"/>
    <property type="match status" value="1"/>
</dbReference>
<dbReference type="PROSITE" id="PS00125">
    <property type="entry name" value="SER_THR_PHOSPHATASE"/>
    <property type="match status" value="1"/>
</dbReference>
<sequence>MAAPEPARAAPPPPPPPPPPPGADRVVKAVPFPPTHRLTSEEVFDLDGIPRVDVLKNHLVKEGRVDEEIALRIINEGAAILRREKTMIEVEAPITVCGDIHGQFFDLMKLFEVGGSPANTRYLFLGDYVDRGYFSIECVLYLWVLKILYPSTLFLLRGNHECRHLTEYFTFKQECKIKYSERVYEACMEAFDSLPLAALLNQQFLCVHGGLSPEIHTLDDIRRLDRFKEPPAFGPMCDLLWSDPSEDFGNEKSQEHFSHNTVRGCSYFYNYPAVCEFLQNNNLLSIIRAHEAQDAGYRMYRKSQTTGFPSLITIFSAPNYLDVYNNKAAVLKYENNVMNIRQFNCSPHPYWLPNFMDVFTWSLPFVGEKVTEMLVNVLSICSDDELMTEGEDQFDGSAAARKEIIRNKIRAIGKMARVFSVLREESESVLTLKGLTPTGMLPSGVLAGGRQTLQSATVEAIEAEKAIRGFSPPHRICSFEEAKGLDRINERMPPRKDAVQQDGFNSLNTAHATENHGTGNHTAQ</sequence>